<organism>
    <name type="scientific">Halalkalibacterium halodurans (strain ATCC BAA-125 / DSM 18197 / FERM 7344 / JCM 9153 / C-125)</name>
    <name type="common">Bacillus halodurans</name>
    <dbReference type="NCBI Taxonomy" id="272558"/>
    <lineage>
        <taxon>Bacteria</taxon>
        <taxon>Bacillati</taxon>
        <taxon>Bacillota</taxon>
        <taxon>Bacilli</taxon>
        <taxon>Bacillales</taxon>
        <taxon>Bacillaceae</taxon>
        <taxon>Halalkalibacterium (ex Joshi et al. 2022)</taxon>
    </lineage>
</organism>
<dbReference type="EC" id="2.7.1.-"/>
<dbReference type="EMBL" id="BA000004">
    <property type="protein sequence ID" value="BAB04314.1"/>
    <property type="molecule type" value="Genomic_DNA"/>
</dbReference>
<dbReference type="PIR" id="C83724">
    <property type="entry name" value="C83724"/>
</dbReference>
<dbReference type="RefSeq" id="WP_010896772.1">
    <property type="nucleotide sequence ID" value="NC_002570.2"/>
</dbReference>
<dbReference type="SMR" id="Q9KF90"/>
<dbReference type="STRING" id="272558.gene:10726464"/>
<dbReference type="KEGG" id="bha:BH0595"/>
<dbReference type="eggNOG" id="COG1263">
    <property type="taxonomic scope" value="Bacteria"/>
</dbReference>
<dbReference type="eggNOG" id="COG1264">
    <property type="taxonomic scope" value="Bacteria"/>
</dbReference>
<dbReference type="eggNOG" id="COG2190">
    <property type="taxonomic scope" value="Bacteria"/>
</dbReference>
<dbReference type="HOGENOM" id="CLU_012312_2_1_9"/>
<dbReference type="OrthoDB" id="9769191at2"/>
<dbReference type="Proteomes" id="UP000001258">
    <property type="component" value="Chromosome"/>
</dbReference>
<dbReference type="GO" id="GO:0005886">
    <property type="term" value="C:plasma membrane"/>
    <property type="evidence" value="ECO:0007669"/>
    <property type="project" value="UniProtKB-SubCell"/>
</dbReference>
<dbReference type="GO" id="GO:0016301">
    <property type="term" value="F:kinase activity"/>
    <property type="evidence" value="ECO:0007669"/>
    <property type="project" value="UniProtKB-KW"/>
</dbReference>
<dbReference type="GO" id="GO:0008982">
    <property type="term" value="F:protein-N(PI)-phosphohistidine-sugar phosphotransferase activity"/>
    <property type="evidence" value="ECO:0007669"/>
    <property type="project" value="InterPro"/>
</dbReference>
<dbReference type="GO" id="GO:0090589">
    <property type="term" value="F:protein-phosphocysteine-trehalose phosphotransferase system transporter activity"/>
    <property type="evidence" value="ECO:0007669"/>
    <property type="project" value="TreeGrafter"/>
</dbReference>
<dbReference type="GO" id="GO:0009401">
    <property type="term" value="P:phosphoenolpyruvate-dependent sugar phosphotransferase system"/>
    <property type="evidence" value="ECO:0007669"/>
    <property type="project" value="UniProtKB-KW"/>
</dbReference>
<dbReference type="GO" id="GO:0015771">
    <property type="term" value="P:trehalose transport"/>
    <property type="evidence" value="ECO:0007669"/>
    <property type="project" value="TreeGrafter"/>
</dbReference>
<dbReference type="CDD" id="cd00212">
    <property type="entry name" value="PTS_IIB_glc"/>
    <property type="match status" value="1"/>
</dbReference>
<dbReference type="FunFam" id="2.70.70.10:FF:000001">
    <property type="entry name" value="PTS system glucose-specific IIA component"/>
    <property type="match status" value="1"/>
</dbReference>
<dbReference type="FunFam" id="3.30.1360.60:FF:000001">
    <property type="entry name" value="PTS system glucose-specific IIBC component PtsG"/>
    <property type="match status" value="1"/>
</dbReference>
<dbReference type="Gene3D" id="2.70.70.10">
    <property type="entry name" value="Glucose Permease (Domain IIA)"/>
    <property type="match status" value="1"/>
</dbReference>
<dbReference type="Gene3D" id="3.30.1360.60">
    <property type="entry name" value="Glucose permease domain IIB"/>
    <property type="match status" value="1"/>
</dbReference>
<dbReference type="InterPro" id="IPR011055">
    <property type="entry name" value="Dup_hybrid_motif"/>
</dbReference>
<dbReference type="InterPro" id="IPR036878">
    <property type="entry name" value="Glu_permease_IIB"/>
</dbReference>
<dbReference type="InterPro" id="IPR018113">
    <property type="entry name" value="PTrfase_EIIB_Cys"/>
</dbReference>
<dbReference type="InterPro" id="IPR001127">
    <property type="entry name" value="PTS_EIIA_1_perm"/>
</dbReference>
<dbReference type="InterPro" id="IPR003352">
    <property type="entry name" value="PTS_EIIC"/>
</dbReference>
<dbReference type="InterPro" id="IPR013013">
    <property type="entry name" value="PTS_EIIC_1"/>
</dbReference>
<dbReference type="InterPro" id="IPR011297">
    <property type="entry name" value="PTS_IIABC_b_glu"/>
</dbReference>
<dbReference type="InterPro" id="IPR001996">
    <property type="entry name" value="PTS_IIB_1"/>
</dbReference>
<dbReference type="InterPro" id="IPR050558">
    <property type="entry name" value="PTS_Sugar-Specific_Components"/>
</dbReference>
<dbReference type="NCBIfam" id="TIGR00830">
    <property type="entry name" value="PTBA"/>
    <property type="match status" value="1"/>
</dbReference>
<dbReference type="NCBIfam" id="TIGR01995">
    <property type="entry name" value="PTS-II-ABC-beta"/>
    <property type="match status" value="1"/>
</dbReference>
<dbReference type="PANTHER" id="PTHR30175">
    <property type="entry name" value="PHOSPHOTRANSFERASE SYSTEM TRANSPORT PROTEIN"/>
    <property type="match status" value="1"/>
</dbReference>
<dbReference type="PANTHER" id="PTHR30175:SF1">
    <property type="entry name" value="PTS SYSTEM ARBUTIN-, CELLOBIOSE-, AND SALICIN-SPECIFIC EIIBC COMPONENT-RELATED"/>
    <property type="match status" value="1"/>
</dbReference>
<dbReference type="Pfam" id="PF00358">
    <property type="entry name" value="PTS_EIIA_1"/>
    <property type="match status" value="1"/>
</dbReference>
<dbReference type="Pfam" id="PF00367">
    <property type="entry name" value="PTS_EIIB"/>
    <property type="match status" value="1"/>
</dbReference>
<dbReference type="Pfam" id="PF02378">
    <property type="entry name" value="PTS_EIIC"/>
    <property type="match status" value="1"/>
</dbReference>
<dbReference type="SUPFAM" id="SSF51261">
    <property type="entry name" value="Duplicated hybrid motif"/>
    <property type="match status" value="1"/>
</dbReference>
<dbReference type="SUPFAM" id="SSF55604">
    <property type="entry name" value="Glucose permease domain IIB"/>
    <property type="match status" value="1"/>
</dbReference>
<dbReference type="PROSITE" id="PS51093">
    <property type="entry name" value="PTS_EIIA_TYPE_1"/>
    <property type="match status" value="1"/>
</dbReference>
<dbReference type="PROSITE" id="PS00371">
    <property type="entry name" value="PTS_EIIA_TYPE_1_HIS"/>
    <property type="match status" value="1"/>
</dbReference>
<dbReference type="PROSITE" id="PS51098">
    <property type="entry name" value="PTS_EIIB_TYPE_1"/>
    <property type="match status" value="1"/>
</dbReference>
<dbReference type="PROSITE" id="PS01035">
    <property type="entry name" value="PTS_EIIB_TYPE_1_CYS"/>
    <property type="match status" value="1"/>
</dbReference>
<dbReference type="PROSITE" id="PS51103">
    <property type="entry name" value="PTS_EIIC_TYPE_1"/>
    <property type="match status" value="1"/>
</dbReference>
<sequence length="636" mass="68438">MKYEQLAKDIIQHVGGKENVISVVHCITRLRFKLKDEGKANTDVLKNMDGIVTVMKSGGQYQVVIGNHVPDVYKDVVEIGGFQNQAETETEDEKKYQGLFNKFIDIIASIFTPVLGVLAATGMIKGLNALFLSTGVLEEANGTYQLLHAIGDSLFYFFPIFLGYTAAKKFGATPFIGMAIGASLVYPTLVVLTEGEPLYTLFTGTIFESPVHITFLGIPVILMSYATSVIPIILAAYFASKVEARLRKIIPDVVKTFLVPFFTLLIVVPLTFIVIGPIATWAGQLLGQFTLWVYNLSPIIAGAFLGGFWQVFVIFGLHWGLIPIAINNLVVQGSDPVLAMVFAASFAQIGAVAAVWLKIKQQKVKTLSVPAFISGIFGVTEPAIYGVTLPLKRPFIISCIAAAVGGAIIGLFRSQGYIIGGLGIFGIPSFLHPADGMDAGFWGIVIAVVVAFVLGFILTYLFGLKSGNASDEQTETKAHTSTGTGEKEEISSPFNGSVITLSEIKDEAFSSGALGEGIAIEPSEGKLFSPVSGMVTALYPTHHALGITTDRGAELLIHIGLDTVQLDGKFFTAHTIQGAQVEKGDLLIEFDIKEIKAAGYAVTTPVIVTNHKQYGQLFLTDKQQVNAGDRLLELTR</sequence>
<evidence type="ECO:0000250" key="1"/>
<evidence type="ECO:0000255" key="2">
    <source>
        <dbReference type="PROSITE-ProRule" id="PRU00416"/>
    </source>
</evidence>
<evidence type="ECO:0000255" key="3">
    <source>
        <dbReference type="PROSITE-ProRule" id="PRU00421"/>
    </source>
</evidence>
<evidence type="ECO:0000255" key="4">
    <source>
        <dbReference type="PROSITE-ProRule" id="PRU00426"/>
    </source>
</evidence>
<evidence type="ECO:0000256" key="5">
    <source>
        <dbReference type="SAM" id="MobiDB-lite"/>
    </source>
</evidence>
<accession>Q9KF90</accession>
<proteinExistence type="inferred from homology"/>
<protein>
    <recommendedName>
        <fullName>PTS system beta-glucoside-specific EIIBCA component</fullName>
    </recommendedName>
    <alternativeName>
        <fullName>EIIBCA-Bgl</fullName>
        <shortName>EII-Bgl</shortName>
    </alternativeName>
    <domain>
        <recommendedName>
            <fullName>Beta-glucoside-specific phosphotransferase enzyme IIB component</fullName>
            <ecNumber>2.7.1.-</ecNumber>
        </recommendedName>
        <alternativeName>
            <fullName>PTS system beta-glucoside-specific EIIB component</fullName>
        </alternativeName>
    </domain>
    <domain>
        <recommendedName>
            <fullName>Beta-glucoside permease IIC component</fullName>
        </recommendedName>
        <alternativeName>
            <fullName>PTS system beta-glucoside-specific EIIC component</fullName>
        </alternativeName>
    </domain>
    <domain>
        <recommendedName>
            <fullName>Beta-glucoside-specific phosphotransferase enzyme IIA component</fullName>
        </recommendedName>
        <alternativeName>
            <fullName>PTS system beta-glucoside-specific EIIA component</fullName>
        </alternativeName>
    </domain>
</protein>
<name>PTV3B_HALH5</name>
<reference key="1">
    <citation type="journal article" date="2000" name="Nucleic Acids Res.">
        <title>Complete genome sequence of the alkaliphilic bacterium Bacillus halodurans and genomic sequence comparison with Bacillus subtilis.</title>
        <authorList>
            <person name="Takami H."/>
            <person name="Nakasone K."/>
            <person name="Takaki Y."/>
            <person name="Maeno G."/>
            <person name="Sasaki R."/>
            <person name="Masui N."/>
            <person name="Fuji F."/>
            <person name="Hirama C."/>
            <person name="Nakamura Y."/>
            <person name="Ogasawara N."/>
            <person name="Kuhara S."/>
            <person name="Horikoshi K."/>
        </authorList>
    </citation>
    <scope>NUCLEOTIDE SEQUENCE [LARGE SCALE GENOMIC DNA]</scope>
    <source>
        <strain>ATCC BAA-125 / DSM 18197 / FERM 7344 / JCM 9153 / C-125</strain>
    </source>
</reference>
<gene>
    <name type="primary">bglP</name>
    <name type="ordered locus">BH0595</name>
</gene>
<keyword id="KW-1003">Cell membrane</keyword>
<keyword id="KW-0418">Kinase</keyword>
<keyword id="KW-0472">Membrane</keyword>
<keyword id="KW-0598">Phosphotransferase system</keyword>
<keyword id="KW-1185">Reference proteome</keyword>
<keyword id="KW-0762">Sugar transport</keyword>
<keyword id="KW-0808">Transferase</keyword>
<keyword id="KW-0812">Transmembrane</keyword>
<keyword id="KW-1133">Transmembrane helix</keyword>
<keyword id="KW-0813">Transport</keyword>
<feature type="chain" id="PRO_0000186479" description="PTS system beta-glucoside-specific EIIBCA component">
    <location>
        <begin position="1"/>
        <end position="636"/>
    </location>
</feature>
<feature type="transmembrane region" description="Helical" evidence="4">
    <location>
        <begin position="104"/>
        <end position="124"/>
    </location>
</feature>
<feature type="transmembrane region" description="Helical" evidence="4">
    <location>
        <begin position="146"/>
        <end position="166"/>
    </location>
</feature>
<feature type="transmembrane region" description="Helical" evidence="4">
    <location>
        <begin position="172"/>
        <end position="192"/>
    </location>
</feature>
<feature type="transmembrane region" description="Helical" evidence="4">
    <location>
        <begin position="215"/>
        <end position="235"/>
    </location>
</feature>
<feature type="transmembrane region" description="Helical" evidence="4">
    <location>
        <begin position="258"/>
        <end position="278"/>
    </location>
</feature>
<feature type="transmembrane region" description="Helical" evidence="4">
    <location>
        <begin position="299"/>
        <end position="319"/>
    </location>
</feature>
<feature type="transmembrane region" description="Helical" evidence="4">
    <location>
        <begin position="337"/>
        <end position="357"/>
    </location>
</feature>
<feature type="transmembrane region" description="Helical" evidence="4">
    <location>
        <begin position="369"/>
        <end position="389"/>
    </location>
</feature>
<feature type="transmembrane region" description="Helical" evidence="4">
    <location>
        <begin position="407"/>
        <end position="427"/>
    </location>
</feature>
<feature type="transmembrane region" description="Helical" evidence="4">
    <location>
        <begin position="444"/>
        <end position="464"/>
    </location>
</feature>
<feature type="domain" description="PTS EIIB type-1" evidence="3">
    <location>
        <begin position="1"/>
        <end position="86"/>
    </location>
</feature>
<feature type="domain" description="PTS EIIC type-1" evidence="4">
    <location>
        <begin position="105"/>
        <end position="476"/>
    </location>
</feature>
<feature type="domain" description="PTS EIIA type-1" evidence="2">
    <location>
        <begin position="506"/>
        <end position="610"/>
    </location>
</feature>
<feature type="region of interest" description="Disordered" evidence="5">
    <location>
        <begin position="472"/>
        <end position="492"/>
    </location>
</feature>
<feature type="active site" description="Phosphocysteine intermediate; for EIIB activity" evidence="3">
    <location>
        <position position="26"/>
    </location>
</feature>
<feature type="active site" description="Tele-phosphohistidine intermediate; for EIIA activity" evidence="2">
    <location>
        <position position="558"/>
    </location>
</feature>
<comment type="function">
    <text evidence="1">The phosphoenolpyruvate-dependent sugar phosphotransferase system (sugar PTS), a major carbohydrate active -transport system, catalyzes the phosphorylation of incoming sugar substrates concomitantly with their translocation across the cell membrane. This system is involved in beta-glucoside transport (By similarity).</text>
</comment>
<comment type="subcellular location">
    <subcellularLocation>
        <location evidence="4">Cell membrane</location>
        <topology evidence="4">Multi-pass membrane protein</topology>
    </subcellularLocation>
</comment>
<comment type="domain">
    <text>The EIIB domain is phosphorylated by phospho-EIIA on a cysteinyl or histidyl residue, depending on the transported sugar. Then, it transfers the phosphoryl group to the sugar substrate concomitantly with the sugar uptake processed by the EIIC domain.</text>
</comment>
<comment type="domain">
    <text>The EIIC domain forms the PTS system translocation channel and contains the specific substrate-binding site.</text>
</comment>
<comment type="domain">
    <text>The EIIA domain is phosphorylated by phospho-HPr on a histidyl residue. Then, it transfers the phosphoryl group to the EIIB domain.</text>
</comment>